<keyword id="KW-0997">Cell inner membrane</keyword>
<keyword id="KW-1003">Cell membrane</keyword>
<keyword id="KW-0143">Chaperone</keyword>
<keyword id="KW-1015">Disulfide bond</keyword>
<keyword id="KW-0249">Electron transport</keyword>
<keyword id="KW-0472">Membrane</keyword>
<keyword id="KW-0560">Oxidoreductase</keyword>
<keyword id="KW-0676">Redox-active center</keyword>
<keyword id="KW-1185">Reference proteome</keyword>
<keyword id="KW-0812">Transmembrane</keyword>
<keyword id="KW-1133">Transmembrane helix</keyword>
<keyword id="KW-0813">Transport</keyword>
<reference key="1">
    <citation type="journal article" date="2005" name="Proc. Natl. Acad. Sci. U.S.A.">
        <title>Complete genome sequence of Vibrio fischeri: a symbiotic bacterium with pathogenic congeners.</title>
        <authorList>
            <person name="Ruby E.G."/>
            <person name="Urbanowski M."/>
            <person name="Campbell J."/>
            <person name="Dunn A."/>
            <person name="Faini M."/>
            <person name="Gunsalus R."/>
            <person name="Lostroh P."/>
            <person name="Lupp C."/>
            <person name="McCann J."/>
            <person name="Millikan D."/>
            <person name="Schaefer A."/>
            <person name="Stabb E."/>
            <person name="Stevens A."/>
            <person name="Visick K."/>
            <person name="Whistler C."/>
            <person name="Greenberg E.P."/>
        </authorList>
    </citation>
    <scope>NUCLEOTIDE SEQUENCE [LARGE SCALE GENOMIC DNA]</scope>
    <source>
        <strain>ATCC 700601 / ES114</strain>
    </source>
</reference>
<name>DSBB_ALIF1</name>
<protein>
    <recommendedName>
        <fullName evidence="1">Disulfide bond formation protein B</fullName>
    </recommendedName>
    <alternativeName>
        <fullName evidence="1">Disulfide oxidoreductase</fullName>
    </alternativeName>
</protein>
<comment type="function">
    <text evidence="1">Required for disulfide bond formation in some periplasmic proteins. Acts by oxidizing the DsbA protein.</text>
</comment>
<comment type="subcellular location">
    <subcellularLocation>
        <location evidence="1">Cell inner membrane</location>
        <topology evidence="1">Multi-pass membrane protein</topology>
    </subcellularLocation>
</comment>
<comment type="similarity">
    <text evidence="1">Belongs to the DsbB family.</text>
</comment>
<evidence type="ECO:0000255" key="1">
    <source>
        <dbReference type="HAMAP-Rule" id="MF_00286"/>
    </source>
</evidence>
<dbReference type="EMBL" id="CP000020">
    <property type="protein sequence ID" value="AAW86130.1"/>
    <property type="molecule type" value="Genomic_DNA"/>
</dbReference>
<dbReference type="RefSeq" id="WP_005419921.1">
    <property type="nucleotide sequence ID" value="NZ_CAWLES010000001.1"/>
</dbReference>
<dbReference type="RefSeq" id="YP_205018.1">
    <property type="nucleotide sequence ID" value="NC_006840.2"/>
</dbReference>
<dbReference type="STRING" id="312309.VF_1635"/>
<dbReference type="EnsemblBacteria" id="AAW86130">
    <property type="protein sequence ID" value="AAW86130"/>
    <property type="gene ID" value="VF_1635"/>
</dbReference>
<dbReference type="GeneID" id="54164325"/>
<dbReference type="KEGG" id="vfi:VF_1635"/>
<dbReference type="PATRIC" id="fig|312309.11.peg.1656"/>
<dbReference type="eggNOG" id="COG1495">
    <property type="taxonomic scope" value="Bacteria"/>
</dbReference>
<dbReference type="HOGENOM" id="CLU_098660_2_0_6"/>
<dbReference type="OrthoDB" id="3711263at2"/>
<dbReference type="Proteomes" id="UP000000537">
    <property type="component" value="Chromosome I"/>
</dbReference>
<dbReference type="GO" id="GO:0005886">
    <property type="term" value="C:plasma membrane"/>
    <property type="evidence" value="ECO:0007669"/>
    <property type="project" value="UniProtKB-SubCell"/>
</dbReference>
<dbReference type="GO" id="GO:0009055">
    <property type="term" value="F:electron transfer activity"/>
    <property type="evidence" value="ECO:0007669"/>
    <property type="project" value="UniProtKB-UniRule"/>
</dbReference>
<dbReference type="GO" id="GO:0015035">
    <property type="term" value="F:protein-disulfide reductase activity"/>
    <property type="evidence" value="ECO:0007669"/>
    <property type="project" value="UniProtKB-UniRule"/>
</dbReference>
<dbReference type="GO" id="GO:0006457">
    <property type="term" value="P:protein folding"/>
    <property type="evidence" value="ECO:0007669"/>
    <property type="project" value="InterPro"/>
</dbReference>
<dbReference type="Gene3D" id="1.20.1550.10">
    <property type="entry name" value="DsbB-like"/>
    <property type="match status" value="1"/>
</dbReference>
<dbReference type="HAMAP" id="MF_00286">
    <property type="entry name" value="DsbB"/>
    <property type="match status" value="1"/>
</dbReference>
<dbReference type="InterPro" id="IPR003752">
    <property type="entry name" value="DiS_bond_form_DsbB/BdbC"/>
</dbReference>
<dbReference type="InterPro" id="IPR022920">
    <property type="entry name" value="Disulphide_bond_form_DsbB"/>
</dbReference>
<dbReference type="InterPro" id="IPR050183">
    <property type="entry name" value="DsbB"/>
</dbReference>
<dbReference type="InterPro" id="IPR023380">
    <property type="entry name" value="DsbB-like_sf"/>
</dbReference>
<dbReference type="NCBIfam" id="NF002485">
    <property type="entry name" value="PRK01749.1"/>
    <property type="match status" value="1"/>
</dbReference>
<dbReference type="PANTHER" id="PTHR36570">
    <property type="entry name" value="DISULFIDE BOND FORMATION PROTEIN B"/>
    <property type="match status" value="1"/>
</dbReference>
<dbReference type="PANTHER" id="PTHR36570:SF2">
    <property type="entry name" value="DISULFIDE BOND FORMATION PROTEIN B"/>
    <property type="match status" value="1"/>
</dbReference>
<dbReference type="Pfam" id="PF02600">
    <property type="entry name" value="DsbB"/>
    <property type="match status" value="1"/>
</dbReference>
<dbReference type="SUPFAM" id="SSF158442">
    <property type="entry name" value="DsbB-like"/>
    <property type="match status" value="1"/>
</dbReference>
<accession>Q5E4B6</accession>
<sequence>MQALNHFSRIRLSWFLLLLCIIFFEASALTFQHIMKLPPCVMCIYERVAMMGIGGAAIIGLLNPNNLIIRWCGFIAWGISAGWGLKLALEHVDFQLNPSPFSTCDLFVTFPSWAPLNKWAPWMFEAYGDCSKIVWQFLTLTMPQWLVIIFAGNLIALAIFVIAQFFNKK</sequence>
<gene>
    <name evidence="1" type="primary">dsbB</name>
    <name type="ordered locus">VF_1635</name>
</gene>
<organism>
    <name type="scientific">Aliivibrio fischeri (strain ATCC 700601 / ES114)</name>
    <name type="common">Vibrio fischeri</name>
    <dbReference type="NCBI Taxonomy" id="312309"/>
    <lineage>
        <taxon>Bacteria</taxon>
        <taxon>Pseudomonadati</taxon>
        <taxon>Pseudomonadota</taxon>
        <taxon>Gammaproteobacteria</taxon>
        <taxon>Vibrionales</taxon>
        <taxon>Vibrionaceae</taxon>
        <taxon>Aliivibrio</taxon>
    </lineage>
</organism>
<feature type="chain" id="PRO_0000298420" description="Disulfide bond formation protein B">
    <location>
        <begin position="1"/>
        <end position="169"/>
    </location>
</feature>
<feature type="topological domain" description="Cytoplasmic" evidence="1">
    <location>
        <begin position="1"/>
        <end position="13"/>
    </location>
</feature>
<feature type="transmembrane region" description="Helical" evidence="1">
    <location>
        <begin position="14"/>
        <end position="30"/>
    </location>
</feature>
<feature type="topological domain" description="Periplasmic" evidence="1">
    <location>
        <begin position="31"/>
        <end position="48"/>
    </location>
</feature>
<feature type="transmembrane region" description="Helical" evidence="1">
    <location>
        <begin position="49"/>
        <end position="64"/>
    </location>
</feature>
<feature type="topological domain" description="Cytoplasmic" evidence="1">
    <location>
        <begin position="65"/>
        <end position="71"/>
    </location>
</feature>
<feature type="transmembrane region" description="Helical" evidence="1">
    <location>
        <begin position="72"/>
        <end position="89"/>
    </location>
</feature>
<feature type="topological domain" description="Periplasmic" evidence="1">
    <location>
        <begin position="90"/>
        <end position="144"/>
    </location>
</feature>
<feature type="transmembrane region" description="Helical" evidence="1">
    <location>
        <begin position="145"/>
        <end position="163"/>
    </location>
</feature>
<feature type="topological domain" description="Cytoplasmic" evidence="1">
    <location>
        <begin position="164"/>
        <end position="169"/>
    </location>
</feature>
<feature type="disulfide bond" description="Redox-active" evidence="1">
    <location>
        <begin position="40"/>
        <end position="43"/>
    </location>
</feature>
<feature type="disulfide bond" description="Redox-active" evidence="1">
    <location>
        <begin position="104"/>
        <end position="130"/>
    </location>
</feature>
<proteinExistence type="inferred from homology"/>